<reference key="1">
    <citation type="journal article" date="2008" name="J. Bacteriol.">
        <title>Genome of the actinomycete plant pathogen Clavibacter michiganensis subsp. sepedonicus suggests recent niche adaptation.</title>
        <authorList>
            <person name="Bentley S.D."/>
            <person name="Corton C."/>
            <person name="Brown S.E."/>
            <person name="Barron A."/>
            <person name="Clark L."/>
            <person name="Doggett J."/>
            <person name="Harris B."/>
            <person name="Ormond D."/>
            <person name="Quail M.A."/>
            <person name="May G."/>
            <person name="Francis D."/>
            <person name="Knudson D."/>
            <person name="Parkhill J."/>
            <person name="Ishimaru C.A."/>
        </authorList>
    </citation>
    <scope>NUCLEOTIDE SEQUENCE [LARGE SCALE GENOMIC DNA]</scope>
    <source>
        <strain>ATCC 33113 / DSM 20744 / JCM 9667 / LMG 2889 / ICMP 2535 / C-1</strain>
    </source>
</reference>
<protein>
    <recommendedName>
        <fullName evidence="1">Protoheme IX farnesyltransferase</fullName>
        <ecNumber evidence="1">2.5.1.141</ecNumber>
    </recommendedName>
    <alternativeName>
        <fullName evidence="1">Heme B farnesyltransferase</fullName>
    </alternativeName>
    <alternativeName>
        <fullName evidence="1">Heme O synthase</fullName>
    </alternativeName>
</protein>
<gene>
    <name evidence="1" type="primary">ctaB</name>
    <name type="ordered locus">CMS1977</name>
</gene>
<dbReference type="EC" id="2.5.1.141" evidence="1"/>
<dbReference type="EMBL" id="AM849034">
    <property type="protein sequence ID" value="CAQ02074.1"/>
    <property type="molecule type" value="Genomic_DNA"/>
</dbReference>
<dbReference type="RefSeq" id="WP_012299305.1">
    <property type="nucleotide sequence ID" value="NZ_MZMN01000003.1"/>
</dbReference>
<dbReference type="SMR" id="B0REI2"/>
<dbReference type="STRING" id="31964.CMS1977"/>
<dbReference type="KEGG" id="cms:CMS1977"/>
<dbReference type="eggNOG" id="COG0109">
    <property type="taxonomic scope" value="Bacteria"/>
</dbReference>
<dbReference type="HOGENOM" id="CLU_029631_0_1_11"/>
<dbReference type="OrthoDB" id="9814417at2"/>
<dbReference type="UniPathway" id="UPA00834">
    <property type="reaction ID" value="UER00712"/>
</dbReference>
<dbReference type="Proteomes" id="UP000001318">
    <property type="component" value="Chromosome"/>
</dbReference>
<dbReference type="GO" id="GO:0005886">
    <property type="term" value="C:plasma membrane"/>
    <property type="evidence" value="ECO:0007669"/>
    <property type="project" value="UniProtKB-SubCell"/>
</dbReference>
<dbReference type="GO" id="GO:0008495">
    <property type="term" value="F:protoheme IX farnesyltransferase activity"/>
    <property type="evidence" value="ECO:0007669"/>
    <property type="project" value="UniProtKB-UniRule"/>
</dbReference>
<dbReference type="GO" id="GO:0048034">
    <property type="term" value="P:heme O biosynthetic process"/>
    <property type="evidence" value="ECO:0007669"/>
    <property type="project" value="UniProtKB-UniRule"/>
</dbReference>
<dbReference type="CDD" id="cd13957">
    <property type="entry name" value="PT_UbiA_Cox10"/>
    <property type="match status" value="1"/>
</dbReference>
<dbReference type="FunFam" id="1.10.357.140:FF:000001">
    <property type="entry name" value="Protoheme IX farnesyltransferase"/>
    <property type="match status" value="1"/>
</dbReference>
<dbReference type="Gene3D" id="1.10.357.140">
    <property type="entry name" value="UbiA prenyltransferase"/>
    <property type="match status" value="1"/>
</dbReference>
<dbReference type="HAMAP" id="MF_00154">
    <property type="entry name" value="CyoE_CtaB"/>
    <property type="match status" value="1"/>
</dbReference>
<dbReference type="InterPro" id="IPR006369">
    <property type="entry name" value="Protohaem_IX_farnesylTrfase"/>
</dbReference>
<dbReference type="InterPro" id="IPR000537">
    <property type="entry name" value="UbiA_prenyltransferase"/>
</dbReference>
<dbReference type="InterPro" id="IPR030470">
    <property type="entry name" value="UbiA_prenylTrfase_CS"/>
</dbReference>
<dbReference type="InterPro" id="IPR044878">
    <property type="entry name" value="UbiA_sf"/>
</dbReference>
<dbReference type="NCBIfam" id="TIGR01473">
    <property type="entry name" value="cyoE_ctaB"/>
    <property type="match status" value="1"/>
</dbReference>
<dbReference type="NCBIfam" id="NF003349">
    <property type="entry name" value="PRK04375.1-2"/>
    <property type="match status" value="1"/>
</dbReference>
<dbReference type="PANTHER" id="PTHR43448:SF7">
    <property type="entry name" value="4-HYDROXYBENZOATE SOLANESYLTRANSFERASE"/>
    <property type="match status" value="1"/>
</dbReference>
<dbReference type="PANTHER" id="PTHR43448">
    <property type="entry name" value="PROTOHEME IX FARNESYLTRANSFERASE, MITOCHONDRIAL"/>
    <property type="match status" value="1"/>
</dbReference>
<dbReference type="Pfam" id="PF01040">
    <property type="entry name" value="UbiA"/>
    <property type="match status" value="1"/>
</dbReference>
<dbReference type="PROSITE" id="PS00943">
    <property type="entry name" value="UBIA"/>
    <property type="match status" value="1"/>
</dbReference>
<keyword id="KW-1003">Cell membrane</keyword>
<keyword id="KW-0350">Heme biosynthesis</keyword>
<keyword id="KW-0472">Membrane</keyword>
<keyword id="KW-0808">Transferase</keyword>
<keyword id="KW-0812">Transmembrane</keyword>
<keyword id="KW-1133">Transmembrane helix</keyword>
<comment type="function">
    <text evidence="1">Converts heme B (protoheme IX) to heme O by substitution of the vinyl group on carbon 2 of heme B porphyrin ring with a hydroxyethyl farnesyl side group.</text>
</comment>
<comment type="catalytic activity">
    <reaction evidence="1">
        <text>heme b + (2E,6E)-farnesyl diphosphate + H2O = Fe(II)-heme o + diphosphate</text>
        <dbReference type="Rhea" id="RHEA:28070"/>
        <dbReference type="ChEBI" id="CHEBI:15377"/>
        <dbReference type="ChEBI" id="CHEBI:33019"/>
        <dbReference type="ChEBI" id="CHEBI:60344"/>
        <dbReference type="ChEBI" id="CHEBI:60530"/>
        <dbReference type="ChEBI" id="CHEBI:175763"/>
        <dbReference type="EC" id="2.5.1.141"/>
    </reaction>
</comment>
<comment type="pathway">
    <text evidence="1">Porphyrin-containing compound metabolism; heme O biosynthesis; heme O from protoheme: step 1/1.</text>
</comment>
<comment type="subcellular location">
    <subcellularLocation>
        <location evidence="1">Cell membrane</location>
        <topology evidence="1">Multi-pass membrane protein</topology>
    </subcellularLocation>
</comment>
<comment type="miscellaneous">
    <text evidence="1">Carbon 2 of the heme B porphyrin ring is defined according to the Fischer nomenclature.</text>
</comment>
<comment type="similarity">
    <text evidence="1">Belongs to the UbiA prenyltransferase family. Protoheme IX farnesyltransferase subfamily.</text>
</comment>
<proteinExistence type="inferred from homology"/>
<name>COXX_CLASE</name>
<evidence type="ECO:0000255" key="1">
    <source>
        <dbReference type="HAMAP-Rule" id="MF_00154"/>
    </source>
</evidence>
<accession>B0REI2</accession>
<feature type="chain" id="PRO_0000346036" description="Protoheme IX farnesyltransferase">
    <location>
        <begin position="1"/>
        <end position="306"/>
    </location>
</feature>
<feature type="transmembrane region" description="Helical" evidence="1">
    <location>
        <begin position="31"/>
        <end position="50"/>
    </location>
</feature>
<feature type="transmembrane region" description="Helical" evidence="1">
    <location>
        <begin position="55"/>
        <end position="77"/>
    </location>
</feature>
<feature type="transmembrane region" description="Helical" evidence="1">
    <location>
        <begin position="104"/>
        <end position="124"/>
    </location>
</feature>
<feature type="transmembrane region" description="Helical" evidence="1">
    <location>
        <begin position="125"/>
        <end position="145"/>
    </location>
</feature>
<feature type="transmembrane region" description="Helical" evidence="1">
    <location>
        <begin position="168"/>
        <end position="188"/>
    </location>
</feature>
<feature type="transmembrane region" description="Helical" evidence="1">
    <location>
        <begin position="218"/>
        <end position="235"/>
    </location>
</feature>
<feature type="transmembrane region" description="Helical" evidence="1">
    <location>
        <begin position="238"/>
        <end position="258"/>
    </location>
</feature>
<feature type="transmembrane region" description="Helical" evidence="1">
    <location>
        <begin position="286"/>
        <end position="306"/>
    </location>
</feature>
<sequence length="306" mass="33770">MNVAVQSRVDRETIGVARKTKAYVALTKPRVIELLLVTTAPVMILAQGGWPNPWLILGVLVGGTLSAGSANAFNCYIDRDIDRVMKRTQRRPLVTGELTDREALVFAWIIGVASIIWLGVISNWLAAALSLAAILFYVFVYTLWLKRRTPQNIVWGGAAGCMPVLIGWAAVTGDISWAPVILFMIVFLWTPPHYWPLSMKYRDDYASVNVPMLAVVRGRAAVGLQTILYSWATLACSLLLIPVAGMGLVYTLAALAGGGWFVYETHRLYDLAVRHEPIKPMRVFHASISYLSLLFLAVGIDPLLPF</sequence>
<organism>
    <name type="scientific">Clavibacter sepedonicus</name>
    <name type="common">Clavibacter michiganensis subsp. sepedonicus</name>
    <dbReference type="NCBI Taxonomy" id="31964"/>
    <lineage>
        <taxon>Bacteria</taxon>
        <taxon>Bacillati</taxon>
        <taxon>Actinomycetota</taxon>
        <taxon>Actinomycetes</taxon>
        <taxon>Micrococcales</taxon>
        <taxon>Microbacteriaceae</taxon>
        <taxon>Clavibacter</taxon>
    </lineage>
</organism>